<name>DOCK9_RAT</name>
<accession>Q63603</accession>
<gene>
    <name type="primary">Dock9</name>
    <name type="synonym">Trg</name>
</gene>
<feature type="chain" id="PRO_0000190001" description="Dedicator of cytokinesis protein 9">
    <location>
        <begin position="1" status="less than"/>
        <end position="720"/>
    </location>
</feature>
<feature type="domain" description="DOCKER" evidence="3">
    <location>
        <begin position="186"/>
        <end position="638"/>
    </location>
</feature>
<feature type="region of interest" description="Interaction with CDC42" evidence="2">
    <location>
        <begin position="277"/>
        <end position="638"/>
    </location>
</feature>
<feature type="non-terminal residue">
    <location>
        <position position="1"/>
    </location>
</feature>
<organism>
    <name type="scientific">Rattus norvegicus</name>
    <name type="common">Rat</name>
    <dbReference type="NCBI Taxonomy" id="10116"/>
    <lineage>
        <taxon>Eukaryota</taxon>
        <taxon>Metazoa</taxon>
        <taxon>Chordata</taxon>
        <taxon>Craniata</taxon>
        <taxon>Vertebrata</taxon>
        <taxon>Euteleostomi</taxon>
        <taxon>Mammalia</taxon>
        <taxon>Eutheria</taxon>
        <taxon>Euarchontoglires</taxon>
        <taxon>Glires</taxon>
        <taxon>Rodentia</taxon>
        <taxon>Myomorpha</taxon>
        <taxon>Muroidea</taxon>
        <taxon>Muridae</taxon>
        <taxon>Murinae</taxon>
        <taxon>Rattus</taxon>
    </lineage>
</organism>
<sequence>KLSRGHSPLMKKVFDVYLCFLQKHQSEMALKNVFTALRSLIYKFPSTFYEGRADMCASLCYEVLKCCNSKLSSIRTEASQLLYFLMRNNFDYTGKKSFVRTHLQVIISLSQLIADVVGIGGTRFQQSLSIINNCANSDRLIKHTSFSSDVKDLTKRIRTVLMATAQMKEHENDPEMLVDLQYSLAKSYASTPELRKTWLDSMARIHVKNGDLSEAAMCYVHVTALVAEYLTRKEADLALQREPPVFPYSHTSCQRKSRGGMFRQGCTAFRVITPNIDEEASMMEDVGMQDVHFNEDVLMELLEQCADGLWKAERLRAGLLTSINSSSPSMKSGGTLETTHLYDTLHRPYSKVTEVITRAAGSWDLLPGGLFGQGFFEDEDGKEYIYKEPKLTPLSEISQRLLKLYSDKFGSENVKMIQDSGKVNPKDLDSKFAYIQVTHVTPFFDEKELQERKTEFERCHNIRRFMFEMPFTQTGKRQGGVEEQCKRRTILTAIHCFPYVKKRIPVMYQHHTDLNPIEVAIDEMSKKVAELHQLCSSAEVDMIKLQLKLQGSVSVQVNAGPLAYARAFLDDTNTKRYPDNKVKLLKEVFRQFVEACGQALAVNERLIKEDQLEYQEEMKANYREIRKELSDIIVPRICPGEDKRATKFPAHLQRHQRDTNKHSGSRVDQFILSCVTLPHEPHVGTCFVMCKLRTTFRANHWFCQAQEEAMGNGREKEPGL</sequence>
<comment type="function">
    <text evidence="1 2">Guanine nucleotide-exchange factor (GEF) that activates CDC42 by exchanging bound GDP for free GTP. Overexpression induces filopodia formation (By similarity).</text>
</comment>
<comment type="subunit">
    <text evidence="2">Homodimer. Interacts preferentially with nucleotide-depleted CDC42 (By similarity).</text>
</comment>
<comment type="subcellular location">
    <subcellularLocation>
        <location evidence="4">Endomembrane system</location>
    </subcellularLocation>
    <text evidence="4">Associated with membranes.</text>
</comment>
<comment type="domain">
    <text evidence="1">The DOCKER domain is necessary and sufficient for the GEF activity.</text>
</comment>
<comment type="miscellaneous">
    <text>'Zizim' means 'spike' in Hebrew.</text>
</comment>
<comment type="similarity">
    <text evidence="4">Belongs to the DOCK family.</text>
</comment>
<comment type="sequence caution" evidence="4">
    <conflict type="frameshift">
        <sequence resource="EMBL-CDS" id="CAA48220"/>
    </conflict>
</comment>
<protein>
    <recommendedName>
        <fullName>Dedicator of cytokinesis protein 9</fullName>
    </recommendedName>
    <alternativeName>
        <fullName>Cdc42 guanine nucleotide exchange factor zizimin-1</fullName>
    </alternativeName>
    <alternativeName>
        <fullName>Protein TRG</fullName>
    </alternativeName>
</protein>
<keyword id="KW-0344">Guanine-nucleotide releasing factor</keyword>
<keyword id="KW-0472">Membrane</keyword>
<keyword id="KW-1185">Reference proteome</keyword>
<dbReference type="EMBL" id="X68101">
    <property type="protein sequence ID" value="CAA48220.1"/>
    <property type="status" value="ALT_FRAME"/>
    <property type="molecule type" value="mRNA"/>
</dbReference>
<dbReference type="PIR" id="I60486">
    <property type="entry name" value="I60486"/>
</dbReference>
<dbReference type="SMR" id="Q63603"/>
<dbReference type="FunCoup" id="Q63603">
    <property type="interactions" value="4"/>
</dbReference>
<dbReference type="IntAct" id="Q63603">
    <property type="interactions" value="1"/>
</dbReference>
<dbReference type="STRING" id="10116.ENSRNOP00000072256"/>
<dbReference type="AGR" id="RGD:629617"/>
<dbReference type="RGD" id="629617">
    <property type="gene designation" value="Dock9"/>
</dbReference>
<dbReference type="InParanoid" id="Q63603"/>
<dbReference type="PhylomeDB" id="Q63603"/>
<dbReference type="Proteomes" id="UP000002494">
    <property type="component" value="Unplaced"/>
</dbReference>
<dbReference type="GO" id="GO:0012505">
    <property type="term" value="C:endomembrane system"/>
    <property type="evidence" value="ECO:0007669"/>
    <property type="project" value="UniProtKB-SubCell"/>
</dbReference>
<dbReference type="GO" id="GO:0016020">
    <property type="term" value="C:membrane"/>
    <property type="evidence" value="ECO:0007669"/>
    <property type="project" value="UniProtKB-KW"/>
</dbReference>
<dbReference type="GO" id="GO:0005085">
    <property type="term" value="F:guanyl-nucleotide exchange factor activity"/>
    <property type="evidence" value="ECO:0000250"/>
    <property type="project" value="UniProtKB"/>
</dbReference>
<dbReference type="GO" id="GO:0031267">
    <property type="term" value="F:small GTPase binding"/>
    <property type="evidence" value="ECO:0000266"/>
    <property type="project" value="RGD"/>
</dbReference>
<dbReference type="GO" id="GO:0043547">
    <property type="term" value="P:positive regulation of GTPase activity"/>
    <property type="evidence" value="ECO:0000250"/>
    <property type="project" value="UniProtKB"/>
</dbReference>
<dbReference type="GO" id="GO:0007264">
    <property type="term" value="P:small GTPase-mediated signal transduction"/>
    <property type="evidence" value="ECO:0007669"/>
    <property type="project" value="InterPro"/>
</dbReference>
<dbReference type="FunFam" id="1.20.58.740:FF:000001">
    <property type="entry name" value="dedicator of cytokinesis protein 9 isoform X1"/>
    <property type="match status" value="1"/>
</dbReference>
<dbReference type="Gene3D" id="1.20.58.740">
    <property type="match status" value="1"/>
</dbReference>
<dbReference type="Gene3D" id="1.25.40.410">
    <property type="match status" value="1"/>
</dbReference>
<dbReference type="InterPro" id="IPR026791">
    <property type="entry name" value="DOCK"/>
</dbReference>
<dbReference type="InterPro" id="IPR043161">
    <property type="entry name" value="DOCK_C_lobe_A"/>
</dbReference>
<dbReference type="InterPro" id="IPR043162">
    <property type="entry name" value="DOCK_C_lobe_C"/>
</dbReference>
<dbReference type="InterPro" id="IPR027357">
    <property type="entry name" value="DOCKER_dom"/>
</dbReference>
<dbReference type="InterPro" id="IPR046769">
    <property type="entry name" value="DOCKER_Lobe_A"/>
</dbReference>
<dbReference type="InterPro" id="IPR046770">
    <property type="entry name" value="DOCKER_Lobe_B"/>
</dbReference>
<dbReference type="InterPro" id="IPR046773">
    <property type="entry name" value="DOCKER_Lobe_C"/>
</dbReference>
<dbReference type="PANTHER" id="PTHR23317">
    <property type="entry name" value="DEDICATOR OF CYTOKINESIS DOCK"/>
    <property type="match status" value="1"/>
</dbReference>
<dbReference type="PANTHER" id="PTHR23317:SF77">
    <property type="entry name" value="DEDICATOR OF CYTOKINESIS PROTEIN 9"/>
    <property type="match status" value="1"/>
</dbReference>
<dbReference type="Pfam" id="PF06920">
    <property type="entry name" value="DHR-2_Lobe_A"/>
    <property type="match status" value="1"/>
</dbReference>
<dbReference type="Pfam" id="PF20422">
    <property type="entry name" value="DHR-2_Lobe_B"/>
    <property type="match status" value="1"/>
</dbReference>
<dbReference type="Pfam" id="PF20421">
    <property type="entry name" value="DHR-2_Lobe_C"/>
    <property type="match status" value="1"/>
</dbReference>
<dbReference type="PROSITE" id="PS51651">
    <property type="entry name" value="DOCKER"/>
    <property type="match status" value="1"/>
</dbReference>
<reference key="1">
    <citation type="journal article" date="1994" name="Life Sci. Adv. (Mol. Biol.)">
        <title>A novel thyroid transcript negatively regulated by tsh.</title>
        <authorList>
            <person name="Pianese L."/>
            <person name="Porcellini A."/>
            <person name="Avvedimento V.E."/>
            <person name="D'Esposti F."/>
            <person name="Feliciello A."/>
            <person name="Monticelli A."/>
            <person name="Musti A.M."/>
            <person name="Tortora G."/>
            <person name="Varrone S."/>
            <person name="Cocozza S."/>
        </authorList>
    </citation>
    <scope>NUCLEOTIDE SEQUENCE [MRNA]</scope>
    <source>
        <strain>Fischer</strain>
    </source>
</reference>
<proteinExistence type="evidence at transcript level"/>
<evidence type="ECO:0000250" key="1">
    <source>
        <dbReference type="UniProtKB" id="Q8BIK4"/>
    </source>
</evidence>
<evidence type="ECO:0000250" key="2">
    <source>
        <dbReference type="UniProtKB" id="Q9BZ29"/>
    </source>
</evidence>
<evidence type="ECO:0000255" key="3">
    <source>
        <dbReference type="PROSITE-ProRule" id="PRU00984"/>
    </source>
</evidence>
<evidence type="ECO:0000305" key="4"/>